<sequence>MPKPNHSTAPLPFPILIGDIGGTNARFSILTDAYAEPKQFPNVRTADFATIDEAIQKGVLDKTAVQPRSAILAVAGPINDDEIPLTNCDWVVRPKTMIEGLGIEDVLVVNDFEAQALAVAALSDENRERIGDATGDMIASRVVLGPGTGLGVGGLVHAQHSWIPVPGEGGHVDLGPRSKRDYQLFPHIETIESRVSAEQILCGRGLVNLYNAICIVDGIQPTMKDPADITSHALAGSDKAAVETVSLFATYLGRVAGDMAMVFMARGGVYLSGGISQKILPALKKPEFRMAFEDKAPHTALLRTIPTYVVTHPLAALAGLSSYARMPANFGVSTEGRRWRR</sequence>
<dbReference type="EC" id="2.7.1.2" evidence="1"/>
<dbReference type="EMBL" id="CP001074">
    <property type="protein sequence ID" value="ACE89212.1"/>
    <property type="molecule type" value="Genomic_DNA"/>
</dbReference>
<dbReference type="SMR" id="B3PXK6"/>
<dbReference type="KEGG" id="rec:RHECIAT_CH0000216"/>
<dbReference type="eggNOG" id="COG0837">
    <property type="taxonomic scope" value="Bacteria"/>
</dbReference>
<dbReference type="HOGENOM" id="CLU_042582_1_0_5"/>
<dbReference type="Proteomes" id="UP000008817">
    <property type="component" value="Chromosome"/>
</dbReference>
<dbReference type="GO" id="GO:0005829">
    <property type="term" value="C:cytosol"/>
    <property type="evidence" value="ECO:0007669"/>
    <property type="project" value="TreeGrafter"/>
</dbReference>
<dbReference type="GO" id="GO:0005524">
    <property type="term" value="F:ATP binding"/>
    <property type="evidence" value="ECO:0007669"/>
    <property type="project" value="UniProtKB-UniRule"/>
</dbReference>
<dbReference type="GO" id="GO:0005536">
    <property type="term" value="F:D-glucose binding"/>
    <property type="evidence" value="ECO:0007669"/>
    <property type="project" value="InterPro"/>
</dbReference>
<dbReference type="GO" id="GO:0004340">
    <property type="term" value="F:glucokinase activity"/>
    <property type="evidence" value="ECO:0007669"/>
    <property type="project" value="UniProtKB-UniRule"/>
</dbReference>
<dbReference type="GO" id="GO:0006096">
    <property type="term" value="P:glycolytic process"/>
    <property type="evidence" value="ECO:0007669"/>
    <property type="project" value="UniProtKB-UniRule"/>
</dbReference>
<dbReference type="CDD" id="cd24008">
    <property type="entry name" value="ASKHA_NBD_GLK"/>
    <property type="match status" value="1"/>
</dbReference>
<dbReference type="Gene3D" id="3.30.420.40">
    <property type="match status" value="1"/>
</dbReference>
<dbReference type="Gene3D" id="3.40.367.20">
    <property type="match status" value="1"/>
</dbReference>
<dbReference type="HAMAP" id="MF_00524">
    <property type="entry name" value="Glucokinase"/>
    <property type="match status" value="1"/>
</dbReference>
<dbReference type="InterPro" id="IPR043129">
    <property type="entry name" value="ATPase_NBD"/>
</dbReference>
<dbReference type="InterPro" id="IPR050201">
    <property type="entry name" value="Bacterial_glucokinase"/>
</dbReference>
<dbReference type="InterPro" id="IPR003836">
    <property type="entry name" value="Glucokinase"/>
</dbReference>
<dbReference type="NCBIfam" id="TIGR00749">
    <property type="entry name" value="glk"/>
    <property type="match status" value="1"/>
</dbReference>
<dbReference type="NCBIfam" id="NF001417">
    <property type="entry name" value="PRK00292.1-4"/>
    <property type="match status" value="1"/>
</dbReference>
<dbReference type="PANTHER" id="PTHR47690">
    <property type="entry name" value="GLUCOKINASE"/>
    <property type="match status" value="1"/>
</dbReference>
<dbReference type="PANTHER" id="PTHR47690:SF1">
    <property type="entry name" value="GLUCOKINASE"/>
    <property type="match status" value="1"/>
</dbReference>
<dbReference type="Pfam" id="PF02685">
    <property type="entry name" value="Glucokinase"/>
    <property type="match status" value="1"/>
</dbReference>
<dbReference type="SUPFAM" id="SSF53067">
    <property type="entry name" value="Actin-like ATPase domain"/>
    <property type="match status" value="1"/>
</dbReference>
<keyword id="KW-0067">ATP-binding</keyword>
<keyword id="KW-0963">Cytoplasm</keyword>
<keyword id="KW-0324">Glycolysis</keyword>
<keyword id="KW-0418">Kinase</keyword>
<keyword id="KW-0547">Nucleotide-binding</keyword>
<keyword id="KW-0808">Transferase</keyword>
<proteinExistence type="inferred from homology"/>
<evidence type="ECO:0000255" key="1">
    <source>
        <dbReference type="HAMAP-Rule" id="MF_00524"/>
    </source>
</evidence>
<protein>
    <recommendedName>
        <fullName evidence="1">Glucokinase</fullName>
        <ecNumber evidence="1">2.7.1.2</ecNumber>
    </recommendedName>
    <alternativeName>
        <fullName evidence="1">Glucose kinase</fullName>
    </alternativeName>
</protein>
<comment type="catalytic activity">
    <reaction evidence="1">
        <text>D-glucose + ATP = D-glucose 6-phosphate + ADP + H(+)</text>
        <dbReference type="Rhea" id="RHEA:17825"/>
        <dbReference type="ChEBI" id="CHEBI:4167"/>
        <dbReference type="ChEBI" id="CHEBI:15378"/>
        <dbReference type="ChEBI" id="CHEBI:30616"/>
        <dbReference type="ChEBI" id="CHEBI:61548"/>
        <dbReference type="ChEBI" id="CHEBI:456216"/>
        <dbReference type="EC" id="2.7.1.2"/>
    </reaction>
</comment>
<comment type="subcellular location">
    <subcellularLocation>
        <location evidence="1">Cytoplasm</location>
    </subcellularLocation>
</comment>
<comment type="similarity">
    <text evidence="1">Belongs to the bacterial glucokinase family.</text>
</comment>
<gene>
    <name evidence="1" type="primary">glk</name>
    <name type="ordered locus">RHECIAT_CH0000216</name>
</gene>
<feature type="chain" id="PRO_1000127715" description="Glucokinase">
    <location>
        <begin position="1"/>
        <end position="341"/>
    </location>
</feature>
<feature type="binding site" evidence="1">
    <location>
        <begin position="18"/>
        <end position="23"/>
    </location>
    <ligand>
        <name>ATP</name>
        <dbReference type="ChEBI" id="CHEBI:30616"/>
    </ligand>
</feature>
<organism>
    <name type="scientific">Rhizobium etli (strain CIAT 652)</name>
    <dbReference type="NCBI Taxonomy" id="491916"/>
    <lineage>
        <taxon>Bacteria</taxon>
        <taxon>Pseudomonadati</taxon>
        <taxon>Pseudomonadota</taxon>
        <taxon>Alphaproteobacteria</taxon>
        <taxon>Hyphomicrobiales</taxon>
        <taxon>Rhizobiaceae</taxon>
        <taxon>Rhizobium/Agrobacterium group</taxon>
        <taxon>Rhizobium</taxon>
    </lineage>
</organism>
<accession>B3PXK6</accession>
<reference key="1">
    <citation type="journal article" date="2010" name="Appl. Environ. Microbiol.">
        <title>Conserved symbiotic plasmid DNA sequences in the multireplicon pangenomic structure of Rhizobium etli.</title>
        <authorList>
            <person name="Gonzalez V."/>
            <person name="Acosta J.L."/>
            <person name="Santamaria R.I."/>
            <person name="Bustos P."/>
            <person name="Fernandez J.L."/>
            <person name="Hernandez Gonzalez I.L."/>
            <person name="Diaz R."/>
            <person name="Flores M."/>
            <person name="Palacios R."/>
            <person name="Mora J."/>
            <person name="Davila G."/>
        </authorList>
    </citation>
    <scope>NUCLEOTIDE SEQUENCE [LARGE SCALE GENOMIC DNA]</scope>
    <source>
        <strain>CIAT 652</strain>
    </source>
</reference>
<name>GLK_RHIE6</name>